<evidence type="ECO:0000255" key="1">
    <source>
        <dbReference type="PROSITE-ProRule" id="PRU00042"/>
    </source>
</evidence>
<evidence type="ECO:0000256" key="2">
    <source>
        <dbReference type="SAM" id="MobiDB-lite"/>
    </source>
</evidence>
<evidence type="ECO:0000269" key="3">
    <source>
    </source>
</evidence>
<evidence type="ECO:0000305" key="4"/>
<evidence type="ECO:0000305" key="5">
    <source>
    </source>
</evidence>
<evidence type="ECO:0000312" key="6">
    <source>
        <dbReference type="Proteomes" id="UP000001940"/>
    </source>
</evidence>
<evidence type="ECO:0000312" key="7">
    <source>
        <dbReference type="WormBase" id="F35H8.3"/>
    </source>
</evidence>
<dbReference type="EMBL" id="BX284602">
    <property type="protein sequence ID" value="CAA85325.1"/>
    <property type="molecule type" value="Genomic_DNA"/>
</dbReference>
<dbReference type="PIR" id="T21820">
    <property type="entry name" value="T21820"/>
</dbReference>
<dbReference type="RefSeq" id="NP_496055.1">
    <property type="nucleotide sequence ID" value="NM_063654.6"/>
</dbReference>
<dbReference type="SMR" id="Q20082"/>
<dbReference type="FunCoup" id="Q20082">
    <property type="interactions" value="1070"/>
</dbReference>
<dbReference type="STRING" id="6239.F35H8.3.1"/>
<dbReference type="PaxDb" id="6239-F35H8.3"/>
<dbReference type="EnsemblMetazoa" id="F35H8.3.1">
    <property type="protein sequence ID" value="F35H8.3.1"/>
    <property type="gene ID" value="WBGene00009448"/>
</dbReference>
<dbReference type="GeneID" id="174505"/>
<dbReference type="KEGG" id="cel:CELE_F35H8.3"/>
<dbReference type="UCSC" id="F35H8.3">
    <property type="organism name" value="c. elegans"/>
</dbReference>
<dbReference type="AGR" id="WB:WBGene00009448"/>
<dbReference type="CTD" id="174505"/>
<dbReference type="WormBase" id="F35H8.3">
    <property type="protein sequence ID" value="CE00981"/>
    <property type="gene ID" value="WBGene00009448"/>
    <property type="gene designation" value="zfp-2"/>
</dbReference>
<dbReference type="eggNOG" id="KOG1721">
    <property type="taxonomic scope" value="Eukaryota"/>
</dbReference>
<dbReference type="GeneTree" id="ENSGT00940000171158"/>
<dbReference type="HOGENOM" id="CLU_652527_0_0_1"/>
<dbReference type="InParanoid" id="Q20082"/>
<dbReference type="OMA" id="CLRKHEL"/>
<dbReference type="OrthoDB" id="9439903at2759"/>
<dbReference type="PhylomeDB" id="Q20082"/>
<dbReference type="Reactome" id="R-CEL-8951664">
    <property type="pathway name" value="Neddylation"/>
</dbReference>
<dbReference type="Reactome" id="R-CEL-983168">
    <property type="pathway name" value="Antigen processing: Ubiquitination &amp; Proteasome degradation"/>
</dbReference>
<dbReference type="PRO" id="PR:Q20082"/>
<dbReference type="Proteomes" id="UP000001940">
    <property type="component" value="Chromosome II"/>
</dbReference>
<dbReference type="Bgee" id="WBGene00009448">
    <property type="expression patterns" value="Expressed in germ line (C elegans) and 4 other cell types or tissues"/>
</dbReference>
<dbReference type="GO" id="GO:0005634">
    <property type="term" value="C:nucleus"/>
    <property type="evidence" value="ECO:0000318"/>
    <property type="project" value="GO_Central"/>
</dbReference>
<dbReference type="GO" id="GO:0001228">
    <property type="term" value="F:DNA-binding transcription activator activity, RNA polymerase II-specific"/>
    <property type="evidence" value="ECO:0000318"/>
    <property type="project" value="GO_Central"/>
</dbReference>
<dbReference type="GO" id="GO:0000978">
    <property type="term" value="F:RNA polymerase II cis-regulatory region sequence-specific DNA binding"/>
    <property type="evidence" value="ECO:0000318"/>
    <property type="project" value="GO_Central"/>
</dbReference>
<dbReference type="GO" id="GO:0008270">
    <property type="term" value="F:zinc ion binding"/>
    <property type="evidence" value="ECO:0007669"/>
    <property type="project" value="UniProtKB-KW"/>
</dbReference>
<dbReference type="GO" id="GO:0006357">
    <property type="term" value="P:regulation of transcription by RNA polymerase II"/>
    <property type="evidence" value="ECO:0000318"/>
    <property type="project" value="GO_Central"/>
</dbReference>
<dbReference type="FunFam" id="3.30.160.60:FF:000064">
    <property type="entry name" value="Early growth response protein 3"/>
    <property type="match status" value="1"/>
</dbReference>
<dbReference type="Gene3D" id="3.30.160.60">
    <property type="entry name" value="Classic Zinc Finger"/>
    <property type="match status" value="5"/>
</dbReference>
<dbReference type="InterPro" id="IPR036236">
    <property type="entry name" value="Znf_C2H2_sf"/>
</dbReference>
<dbReference type="InterPro" id="IPR013087">
    <property type="entry name" value="Znf_C2H2_type"/>
</dbReference>
<dbReference type="PANTHER" id="PTHR24379:SF127">
    <property type="entry name" value="BLOODY FINGERS-RELATED"/>
    <property type="match status" value="1"/>
</dbReference>
<dbReference type="PANTHER" id="PTHR24379">
    <property type="entry name" value="KRAB AND ZINC FINGER DOMAIN-CONTAINING"/>
    <property type="match status" value="1"/>
</dbReference>
<dbReference type="Pfam" id="PF00096">
    <property type="entry name" value="zf-C2H2"/>
    <property type="match status" value="2"/>
</dbReference>
<dbReference type="SMART" id="SM00355">
    <property type="entry name" value="ZnF_C2H2"/>
    <property type="match status" value="7"/>
</dbReference>
<dbReference type="SUPFAM" id="SSF57667">
    <property type="entry name" value="beta-beta-alpha zinc fingers"/>
    <property type="match status" value="3"/>
</dbReference>
<dbReference type="PROSITE" id="PS00028">
    <property type="entry name" value="ZINC_FINGER_C2H2_1"/>
    <property type="match status" value="7"/>
</dbReference>
<dbReference type="PROSITE" id="PS50157">
    <property type="entry name" value="ZINC_FINGER_C2H2_2"/>
    <property type="match status" value="7"/>
</dbReference>
<name>ZNF2_CAEEL</name>
<protein>
    <recommendedName>
        <fullName evidence="7">Zinc finger protein zfp-2</fullName>
    </recommendedName>
</protein>
<sequence length="422" mass="48607">MEEMMMNDPSAMVIYEEEVTTAPNLPCSLIQQRSWDEEKPIGYELTNTKCYKTPNGVQKTATIQREQLSTSKDFGEQQIVEMDGEFSIEGTDMHAIPCTSSSMQPSTSSNPSSGEHQPVPLRRMAIKIGQRVLRFKVISAEEAPEAPLDTQDSWINDPKPVTTPKALAGLYRCTNCKTYFGNKEVYQRHIQEVHGDARPFRCFNCGMRFANKTSMTHHLKDHSLLKPMFSCDYCPRIFSKLESKTRHHKMHFTRSTCQTCMRFFTTEDALRHHQSTAHPATFDSGPPPEDLLPNGKSARYSCSYCNLRFHFKKDMLVHERIHTGEKPYSCGYCMKSFAQSQALTAHIRTHTKELPYGCGKCDKRFRDNSCLRKHELAAHTDEPIVRPISVAYSNQVQKQMQRQRENRRKQELLIAERHPYRI</sequence>
<keyword id="KW-0238">DNA-binding</keyword>
<keyword id="KW-0479">Metal-binding</keyword>
<keyword id="KW-0539">Nucleus</keyword>
<keyword id="KW-1185">Reference proteome</keyword>
<keyword id="KW-0677">Repeat</keyword>
<keyword id="KW-0804">Transcription</keyword>
<keyword id="KW-0805">Transcription regulation</keyword>
<keyword id="KW-0862">Zinc</keyword>
<keyword id="KW-0863">Zinc-finger</keyword>
<feature type="chain" id="PRO_0000441015" description="Zinc finger protein zfp-2" evidence="4">
    <location>
        <begin position="1"/>
        <end position="422"/>
    </location>
</feature>
<feature type="zinc finger region" description="C2H2-type 1" evidence="1">
    <location>
        <begin position="171"/>
        <end position="194"/>
    </location>
</feature>
<feature type="zinc finger region" description="C2H2-type 2" evidence="1">
    <location>
        <begin position="200"/>
        <end position="222"/>
    </location>
</feature>
<feature type="zinc finger region" description="C2H2-type 3" evidence="1">
    <location>
        <begin position="229"/>
        <end position="251"/>
    </location>
</feature>
<feature type="zinc finger region" description="C2H2-type 4" evidence="1">
    <location>
        <begin position="255"/>
        <end position="278"/>
    </location>
</feature>
<feature type="zinc finger region" description="C2H2-type 5" evidence="1">
    <location>
        <begin position="300"/>
        <end position="322"/>
    </location>
</feature>
<feature type="zinc finger region" description="C2H2-type 6" evidence="1">
    <location>
        <begin position="328"/>
        <end position="350"/>
    </location>
</feature>
<feature type="zinc finger region" description="C2H2-type 7" evidence="1">
    <location>
        <begin position="356"/>
        <end position="379"/>
    </location>
</feature>
<feature type="region of interest" description="Disordered" evidence="2">
    <location>
        <begin position="95"/>
        <end position="119"/>
    </location>
</feature>
<feature type="compositionally biased region" description="Low complexity" evidence="2">
    <location>
        <begin position="99"/>
        <end position="113"/>
    </location>
</feature>
<gene>
    <name evidence="7" type="primary">zfp-2</name>
    <name evidence="7" type="ORF">F35H8.3</name>
</gene>
<reference evidence="6" key="1">
    <citation type="journal article" date="1998" name="Science">
        <title>Genome sequence of the nematode C. elegans: a platform for investigating biology.</title>
        <authorList>
            <consortium name="The C. elegans sequencing consortium"/>
        </authorList>
    </citation>
    <scope>NUCLEOTIDE SEQUENCE [LARGE SCALE GENOMIC DNA]</scope>
    <source>
        <strain evidence="6">Bristol N2</strain>
    </source>
</reference>
<reference evidence="4" key="2">
    <citation type="journal article" date="2007" name="BMC Dev. Biol.">
        <title>Large-scale RNAi screens identify novel genes that interact with the C. elegans retinoblastoma pathway as well as splicing-related components with synMuv B activity.</title>
        <authorList>
            <person name="Ceron J."/>
            <person name="Rual J.F."/>
            <person name="Chandra A."/>
            <person name="Dupuy D."/>
            <person name="Vidal M."/>
            <person name="van den Heuvel S."/>
        </authorList>
    </citation>
    <scope>FUNCTION</scope>
    <scope>SUBCELLULAR LOCATION</scope>
    <scope>TISSUE SPECIFICITY</scope>
    <scope>DISRUPTION PHENOTYPE</scope>
</reference>
<organism evidence="6">
    <name type="scientific">Caenorhabditis elegans</name>
    <dbReference type="NCBI Taxonomy" id="6239"/>
    <lineage>
        <taxon>Eukaryota</taxon>
        <taxon>Metazoa</taxon>
        <taxon>Ecdysozoa</taxon>
        <taxon>Nematoda</taxon>
        <taxon>Chromadorea</taxon>
        <taxon>Rhabditida</taxon>
        <taxon>Rhabditina</taxon>
        <taxon>Rhabditomorpha</taxon>
        <taxon>Rhabditoidea</taxon>
        <taxon>Rhabditidae</taxon>
        <taxon>Peloderinae</taxon>
        <taxon>Caenorhabditis</taxon>
    </lineage>
</organism>
<comment type="function">
    <text evidence="3">Probable zinc finger transcription factor that acts as a transcriptional repressor. Acts redundantly with the transcriptional repressor lin-35 to control the development of somatic gonad lineages. May, in addition, suppress sensitivity to RNAi.</text>
</comment>
<comment type="subcellular location">
    <subcellularLocation>
        <location evidence="5">Nucleus</location>
    </subcellularLocation>
</comment>
<comment type="tissue specificity">
    <text evidence="3">Expressed in vulval cells and all somatic gonad structures such as spermatheca, sheath cells, uterine cells and distal tip cells.</text>
</comment>
<comment type="disruption phenotype">
    <text evidence="3">No visible phenotype. Double knockout with lin-35 results in sterility, defects in gonad migration and vulval morphology.</text>
</comment>
<proteinExistence type="evidence at transcript level"/>
<accession>Q20082</accession>